<name>RS21_STRP4</name>
<dbReference type="EMBL" id="CP001015">
    <property type="protein sequence ID" value="ACF55431.1"/>
    <property type="molecule type" value="Genomic_DNA"/>
</dbReference>
<dbReference type="SMR" id="B5E5S2"/>
<dbReference type="KEGG" id="spx:SPG_1355"/>
<dbReference type="HOGENOM" id="CLU_159258_3_2_9"/>
<dbReference type="GO" id="GO:1990904">
    <property type="term" value="C:ribonucleoprotein complex"/>
    <property type="evidence" value="ECO:0007669"/>
    <property type="project" value="UniProtKB-KW"/>
</dbReference>
<dbReference type="GO" id="GO:0005840">
    <property type="term" value="C:ribosome"/>
    <property type="evidence" value="ECO:0007669"/>
    <property type="project" value="UniProtKB-KW"/>
</dbReference>
<dbReference type="GO" id="GO:0003735">
    <property type="term" value="F:structural constituent of ribosome"/>
    <property type="evidence" value="ECO:0007669"/>
    <property type="project" value="InterPro"/>
</dbReference>
<dbReference type="GO" id="GO:0006412">
    <property type="term" value="P:translation"/>
    <property type="evidence" value="ECO:0007669"/>
    <property type="project" value="UniProtKB-UniRule"/>
</dbReference>
<dbReference type="Gene3D" id="1.20.5.1150">
    <property type="entry name" value="Ribosomal protein S8"/>
    <property type="match status" value="1"/>
</dbReference>
<dbReference type="HAMAP" id="MF_00358">
    <property type="entry name" value="Ribosomal_bS21"/>
    <property type="match status" value="1"/>
</dbReference>
<dbReference type="InterPro" id="IPR001911">
    <property type="entry name" value="Ribosomal_bS21"/>
</dbReference>
<dbReference type="InterPro" id="IPR018278">
    <property type="entry name" value="Ribosomal_bS21_CS"/>
</dbReference>
<dbReference type="InterPro" id="IPR038380">
    <property type="entry name" value="Ribosomal_bS21_sf"/>
</dbReference>
<dbReference type="NCBIfam" id="TIGR00030">
    <property type="entry name" value="S21p"/>
    <property type="match status" value="1"/>
</dbReference>
<dbReference type="PANTHER" id="PTHR21109">
    <property type="entry name" value="MITOCHONDRIAL 28S RIBOSOMAL PROTEIN S21"/>
    <property type="match status" value="1"/>
</dbReference>
<dbReference type="PANTHER" id="PTHR21109:SF22">
    <property type="entry name" value="SMALL RIBOSOMAL SUBUNIT PROTEIN BS21"/>
    <property type="match status" value="1"/>
</dbReference>
<dbReference type="Pfam" id="PF01165">
    <property type="entry name" value="Ribosomal_S21"/>
    <property type="match status" value="1"/>
</dbReference>
<dbReference type="PRINTS" id="PR00976">
    <property type="entry name" value="RIBOSOMALS21"/>
</dbReference>
<dbReference type="PROSITE" id="PS01181">
    <property type="entry name" value="RIBOSOMAL_S21"/>
    <property type="match status" value="1"/>
</dbReference>
<feature type="chain" id="PRO_1000120667" description="Small ribosomal subunit protein bS21">
    <location>
        <begin position="1"/>
        <end position="58"/>
    </location>
</feature>
<feature type="region of interest" description="Disordered" evidence="2">
    <location>
        <begin position="39"/>
        <end position="58"/>
    </location>
</feature>
<feature type="compositionally biased region" description="Basic residues" evidence="2">
    <location>
        <begin position="43"/>
        <end position="58"/>
    </location>
</feature>
<comment type="similarity">
    <text evidence="1">Belongs to the bacterial ribosomal protein bS21 family.</text>
</comment>
<reference key="1">
    <citation type="journal article" date="2001" name="Microb. Drug Resist.">
        <title>Annotated draft genomic sequence from a Streptococcus pneumoniae type 19F clinical isolate.</title>
        <authorList>
            <person name="Dopazo J."/>
            <person name="Mendoza A."/>
            <person name="Herrero J."/>
            <person name="Caldara F."/>
            <person name="Humbert Y."/>
            <person name="Friedli L."/>
            <person name="Guerrier M."/>
            <person name="Grand-Schenk E."/>
            <person name="Gandin C."/>
            <person name="de Francesco M."/>
            <person name="Polissi A."/>
            <person name="Buell G."/>
            <person name="Feger G."/>
            <person name="Garcia E."/>
            <person name="Peitsch M."/>
            <person name="Garcia-Bustos J.F."/>
        </authorList>
    </citation>
    <scope>NUCLEOTIDE SEQUENCE [LARGE SCALE GENOMIC DNA]</scope>
    <source>
        <strain>G54</strain>
    </source>
</reference>
<reference key="2">
    <citation type="submission" date="2008-03" db="EMBL/GenBank/DDBJ databases">
        <title>Pneumococcal beta glucoside metabolism investigated by whole genome comparison.</title>
        <authorList>
            <person name="Mulas L."/>
            <person name="Trappetti C."/>
            <person name="Hakenbeck R."/>
            <person name="Iannelli F."/>
            <person name="Pozzi G."/>
            <person name="Davidsen T.M."/>
            <person name="Tettelin H."/>
            <person name="Oggioni M."/>
        </authorList>
    </citation>
    <scope>NUCLEOTIDE SEQUENCE [LARGE SCALE GENOMIC DNA]</scope>
    <source>
        <strain>G54</strain>
    </source>
</reference>
<proteinExistence type="inferred from homology"/>
<gene>
    <name evidence="1" type="primary">rpsU</name>
    <name type="ordered locus">SPG_1355</name>
</gene>
<sequence>MSKTVVRKNESLDDALRRFKRAVTKAGTLQETRKREFYEKPSVKRKRKSEVARKRKKF</sequence>
<accession>B5E5S2</accession>
<evidence type="ECO:0000255" key="1">
    <source>
        <dbReference type="HAMAP-Rule" id="MF_00358"/>
    </source>
</evidence>
<evidence type="ECO:0000256" key="2">
    <source>
        <dbReference type="SAM" id="MobiDB-lite"/>
    </source>
</evidence>
<evidence type="ECO:0000305" key="3"/>
<keyword id="KW-0687">Ribonucleoprotein</keyword>
<keyword id="KW-0689">Ribosomal protein</keyword>
<organism>
    <name type="scientific">Streptococcus pneumoniae serotype 19F (strain G54)</name>
    <dbReference type="NCBI Taxonomy" id="512566"/>
    <lineage>
        <taxon>Bacteria</taxon>
        <taxon>Bacillati</taxon>
        <taxon>Bacillota</taxon>
        <taxon>Bacilli</taxon>
        <taxon>Lactobacillales</taxon>
        <taxon>Streptococcaceae</taxon>
        <taxon>Streptococcus</taxon>
    </lineage>
</organism>
<protein>
    <recommendedName>
        <fullName evidence="1">Small ribosomal subunit protein bS21</fullName>
    </recommendedName>
    <alternativeName>
        <fullName evidence="3">30S ribosomal protein S21</fullName>
    </alternativeName>
</protein>